<dbReference type="EMBL" id="AC006424">
    <property type="status" value="NOT_ANNOTATED_CDS"/>
    <property type="molecule type" value="Genomic_DNA"/>
</dbReference>
<dbReference type="EMBL" id="AC021045">
    <property type="status" value="NOT_ANNOTATED_CDS"/>
    <property type="molecule type" value="Genomic_DNA"/>
</dbReference>
<dbReference type="EMBL" id="CP002684">
    <property type="protein sequence ID" value="AEE31564.1"/>
    <property type="molecule type" value="Genomic_DNA"/>
</dbReference>
<dbReference type="RefSeq" id="NP_174586.2">
    <property type="nucleotide sequence ID" value="NM_103044.3"/>
</dbReference>
<dbReference type="SMR" id="F4HPH2"/>
<dbReference type="IntAct" id="F4HPH2">
    <property type="interactions" value="36"/>
</dbReference>
<dbReference type="STRING" id="3702.F4HPH2"/>
<dbReference type="PaxDb" id="3702-AT1G33100.1"/>
<dbReference type="ProteomicsDB" id="220720"/>
<dbReference type="EnsemblPlants" id="AT1G33100.1">
    <property type="protein sequence ID" value="AT1G33100.1"/>
    <property type="gene ID" value="AT1G33100"/>
</dbReference>
<dbReference type="GeneID" id="840206"/>
<dbReference type="Gramene" id="AT1G33100.1">
    <property type="protein sequence ID" value="AT1G33100.1"/>
    <property type="gene ID" value="AT1G33100"/>
</dbReference>
<dbReference type="KEGG" id="ath:AT1G33100"/>
<dbReference type="Araport" id="AT1G33100"/>
<dbReference type="TAIR" id="AT1G33100"/>
<dbReference type="eggNOG" id="KOG1347">
    <property type="taxonomic scope" value="Eukaryota"/>
</dbReference>
<dbReference type="HOGENOM" id="CLU_012893_1_4_1"/>
<dbReference type="InParanoid" id="F4HPH2"/>
<dbReference type="OMA" id="KRWYMDW"/>
<dbReference type="PRO" id="PR:F4HPH2"/>
<dbReference type="Proteomes" id="UP000006548">
    <property type="component" value="Chromosome 1"/>
</dbReference>
<dbReference type="ExpressionAtlas" id="F4HPH2">
    <property type="expression patterns" value="baseline and differential"/>
</dbReference>
<dbReference type="GO" id="GO:0016020">
    <property type="term" value="C:membrane"/>
    <property type="evidence" value="ECO:0007669"/>
    <property type="project" value="UniProtKB-SubCell"/>
</dbReference>
<dbReference type="GO" id="GO:0015297">
    <property type="term" value="F:antiporter activity"/>
    <property type="evidence" value="ECO:0007669"/>
    <property type="project" value="InterPro"/>
</dbReference>
<dbReference type="GO" id="GO:0042910">
    <property type="term" value="F:xenobiotic transmembrane transporter activity"/>
    <property type="evidence" value="ECO:0007669"/>
    <property type="project" value="InterPro"/>
</dbReference>
<dbReference type="GO" id="GO:1990961">
    <property type="term" value="P:xenobiotic detoxification by transmembrane export across the plasma membrane"/>
    <property type="evidence" value="ECO:0007669"/>
    <property type="project" value="InterPro"/>
</dbReference>
<dbReference type="CDD" id="cd13132">
    <property type="entry name" value="MATE_eukaryotic"/>
    <property type="match status" value="1"/>
</dbReference>
<dbReference type="InterPro" id="IPR045069">
    <property type="entry name" value="MATE_euk"/>
</dbReference>
<dbReference type="InterPro" id="IPR002528">
    <property type="entry name" value="MATE_fam"/>
</dbReference>
<dbReference type="NCBIfam" id="TIGR00797">
    <property type="entry name" value="matE"/>
    <property type="match status" value="1"/>
</dbReference>
<dbReference type="PANTHER" id="PTHR11206">
    <property type="entry name" value="MULTIDRUG RESISTANCE PROTEIN"/>
    <property type="match status" value="1"/>
</dbReference>
<dbReference type="Pfam" id="PF01554">
    <property type="entry name" value="MatE"/>
    <property type="match status" value="2"/>
</dbReference>
<feature type="chain" id="PRO_0000434061" description="Protein DETOXIFICATION 20">
    <location>
        <begin position="1"/>
        <end position="491"/>
    </location>
</feature>
<feature type="transmembrane region" description="Helical" evidence="1">
    <location>
        <begin position="37"/>
        <end position="57"/>
    </location>
</feature>
<feature type="transmembrane region" description="Helical" evidence="1">
    <location>
        <begin position="75"/>
        <end position="95"/>
    </location>
</feature>
<feature type="transmembrane region" description="Helical" evidence="1">
    <location>
        <begin position="120"/>
        <end position="140"/>
    </location>
</feature>
<feature type="transmembrane region" description="Helical" evidence="1">
    <location>
        <begin position="156"/>
        <end position="176"/>
    </location>
</feature>
<feature type="transmembrane region" description="Helical" evidence="1">
    <location>
        <begin position="185"/>
        <end position="205"/>
    </location>
</feature>
<feature type="transmembrane region" description="Helical" evidence="1">
    <location>
        <begin position="214"/>
        <end position="234"/>
    </location>
</feature>
<feature type="transmembrane region" description="Helical" evidence="1">
    <location>
        <begin position="265"/>
        <end position="285"/>
    </location>
</feature>
<feature type="transmembrane region" description="Helical" evidence="1">
    <location>
        <begin position="296"/>
        <end position="316"/>
    </location>
</feature>
<feature type="transmembrane region" description="Helical" evidence="1">
    <location>
        <begin position="337"/>
        <end position="357"/>
    </location>
</feature>
<feature type="transmembrane region" description="Helical" evidence="1">
    <location>
        <begin position="381"/>
        <end position="401"/>
    </location>
</feature>
<feature type="transmembrane region" description="Helical" evidence="1">
    <location>
        <begin position="413"/>
        <end position="433"/>
    </location>
</feature>
<feature type="transmembrane region" description="Helical" evidence="1">
    <location>
        <begin position="438"/>
        <end position="458"/>
    </location>
</feature>
<reference key="1">
    <citation type="journal article" date="2000" name="Nature">
        <title>Sequence and analysis of chromosome 1 of the plant Arabidopsis thaliana.</title>
        <authorList>
            <person name="Theologis A."/>
            <person name="Ecker J.R."/>
            <person name="Palm C.J."/>
            <person name="Federspiel N.A."/>
            <person name="Kaul S."/>
            <person name="White O."/>
            <person name="Alonso J."/>
            <person name="Altafi H."/>
            <person name="Araujo R."/>
            <person name="Bowman C.L."/>
            <person name="Brooks S.Y."/>
            <person name="Buehler E."/>
            <person name="Chan A."/>
            <person name="Chao Q."/>
            <person name="Chen H."/>
            <person name="Cheuk R.F."/>
            <person name="Chin C.W."/>
            <person name="Chung M.K."/>
            <person name="Conn L."/>
            <person name="Conway A.B."/>
            <person name="Conway A.R."/>
            <person name="Creasy T.H."/>
            <person name="Dewar K."/>
            <person name="Dunn P."/>
            <person name="Etgu P."/>
            <person name="Feldblyum T.V."/>
            <person name="Feng J.-D."/>
            <person name="Fong B."/>
            <person name="Fujii C.Y."/>
            <person name="Gill J.E."/>
            <person name="Goldsmith A.D."/>
            <person name="Haas B."/>
            <person name="Hansen N.F."/>
            <person name="Hughes B."/>
            <person name="Huizar L."/>
            <person name="Hunter J.L."/>
            <person name="Jenkins J."/>
            <person name="Johnson-Hopson C."/>
            <person name="Khan S."/>
            <person name="Khaykin E."/>
            <person name="Kim C.J."/>
            <person name="Koo H.L."/>
            <person name="Kremenetskaia I."/>
            <person name="Kurtz D.B."/>
            <person name="Kwan A."/>
            <person name="Lam B."/>
            <person name="Langin-Hooper S."/>
            <person name="Lee A."/>
            <person name="Lee J.M."/>
            <person name="Lenz C.A."/>
            <person name="Li J.H."/>
            <person name="Li Y.-P."/>
            <person name="Lin X."/>
            <person name="Liu S.X."/>
            <person name="Liu Z.A."/>
            <person name="Luros J.S."/>
            <person name="Maiti R."/>
            <person name="Marziali A."/>
            <person name="Militscher J."/>
            <person name="Miranda M."/>
            <person name="Nguyen M."/>
            <person name="Nierman W.C."/>
            <person name="Osborne B.I."/>
            <person name="Pai G."/>
            <person name="Peterson J."/>
            <person name="Pham P.K."/>
            <person name="Rizzo M."/>
            <person name="Rooney T."/>
            <person name="Rowley D."/>
            <person name="Sakano H."/>
            <person name="Salzberg S.L."/>
            <person name="Schwartz J.R."/>
            <person name="Shinn P."/>
            <person name="Southwick A.M."/>
            <person name="Sun H."/>
            <person name="Tallon L.J."/>
            <person name="Tambunga G."/>
            <person name="Toriumi M.J."/>
            <person name="Town C.D."/>
            <person name="Utterback T."/>
            <person name="Van Aken S."/>
            <person name="Vaysberg M."/>
            <person name="Vysotskaia V.S."/>
            <person name="Walker M."/>
            <person name="Wu D."/>
            <person name="Yu G."/>
            <person name="Fraser C.M."/>
            <person name="Venter J.C."/>
            <person name="Davis R.W."/>
        </authorList>
    </citation>
    <scope>NUCLEOTIDE SEQUENCE [LARGE SCALE GENOMIC DNA]</scope>
    <source>
        <strain>cv. Columbia</strain>
    </source>
</reference>
<reference key="2">
    <citation type="journal article" date="2017" name="Plant J.">
        <title>Araport11: a complete reannotation of the Arabidopsis thaliana reference genome.</title>
        <authorList>
            <person name="Cheng C.Y."/>
            <person name="Krishnakumar V."/>
            <person name="Chan A.P."/>
            <person name="Thibaud-Nissen F."/>
            <person name="Schobel S."/>
            <person name="Town C.D."/>
        </authorList>
    </citation>
    <scope>GENOME REANNOTATION</scope>
    <source>
        <strain>cv. Columbia</strain>
    </source>
</reference>
<reference key="3">
    <citation type="journal article" date="2002" name="J. Biol. Chem.">
        <title>Functional cloning and characterization of a plant efflux carrier for multidrug and heavy metal detoxification.</title>
        <authorList>
            <person name="Li L."/>
            <person name="He Z."/>
            <person name="Pandey G.K."/>
            <person name="Tsuchiya T."/>
            <person name="Luan S."/>
        </authorList>
    </citation>
    <scope>GENE FAMILY</scope>
    <scope>NOMENCLATURE</scope>
</reference>
<reference key="4">
    <citation type="journal article" date="2003" name="Eur. J. Biochem.">
        <title>The multidrug/oligosaccharidyl-lipid/polysaccharide (MOP) exporter superfamily.</title>
        <authorList>
            <person name="Hvorup R.N."/>
            <person name="Winnen B."/>
            <person name="Chang A.B."/>
            <person name="Jiang Y."/>
            <person name="Zhou X.F."/>
            <person name="Saier M.H. Jr."/>
        </authorList>
    </citation>
    <scope>GENE FAMILY</scope>
</reference>
<proteinExistence type="inferred from homology"/>
<comment type="subcellular location">
    <subcellularLocation>
        <location evidence="1">Membrane</location>
        <topology evidence="1">Multi-pass membrane protein</topology>
    </subcellularLocation>
</comment>
<comment type="similarity">
    <text evidence="3">Belongs to the multi antimicrobial extrusion (MATE) (TC 2.A.66.1) family.</text>
</comment>
<evidence type="ECO:0000255" key="1"/>
<evidence type="ECO:0000303" key="2">
    <source>
    </source>
</evidence>
<evidence type="ECO:0000305" key="3"/>
<evidence type="ECO:0000312" key="4">
    <source>
        <dbReference type="Araport" id="AT1G33100"/>
    </source>
</evidence>
<evidence type="ECO:0000312" key="5">
    <source>
        <dbReference type="EMBL" id="AC006424"/>
    </source>
</evidence>
<evidence type="ECO:0000312" key="6">
    <source>
        <dbReference type="EMBL" id="AC021045"/>
    </source>
</evidence>
<protein>
    <recommendedName>
        <fullName evidence="2">Protein DETOXIFICATION 20</fullName>
        <shortName evidence="2">AtDTX20</shortName>
    </recommendedName>
    <alternativeName>
        <fullName evidence="3">Multidrug and toxic compound extrusion protein 20</fullName>
        <shortName evidence="3">MATE protein 20</shortName>
    </alternativeName>
</protein>
<accession>F4HPH2</accession>
<name>DTX20_ARATH</name>
<sequence>MAGRGGELTEALVKKTGREEEDELGMKEKVWIESKKLWVVAAPAIFTRYSTFGVSMVTQAFIGHLGPTELAAYSITFTILLRFSNGILLGMAGALGTLCGQAYGAKQYQMLGIYLQRSWIVLTGGTICLMPVFIFAGPILLALGQEERIVRVARVLALWVIGINFSFVPSFTCQMFLQAQSKNKIISYVTAVSLGLHVFFSWLLVAHFNFGITGAMTSMLIAFWLPIIVQLLYVTCGGCKDTWRGFSMLAFKDLWPVLKLSLSSGGMLCLELWYNSVLVLLTGNLKNAEVALDALAICISINALEMMIALGFLAAVSVRVSNELGSGNPKGAKFATLIAVFTSLSIGIVLFFVFLFLRGRISYIFTTSEAVAAEVADLSPLLAFSILLNSVQPVLSGVAIGAGWQGYVAYVNLACYYLVGIPIGVILGYVVGLQVKGVWIGMLFGIFVQTCVLTVMTLRTDWDQQVSTSLRNINRWVVPESRDANQISSEE</sequence>
<organism>
    <name type="scientific">Arabidopsis thaliana</name>
    <name type="common">Mouse-ear cress</name>
    <dbReference type="NCBI Taxonomy" id="3702"/>
    <lineage>
        <taxon>Eukaryota</taxon>
        <taxon>Viridiplantae</taxon>
        <taxon>Streptophyta</taxon>
        <taxon>Embryophyta</taxon>
        <taxon>Tracheophyta</taxon>
        <taxon>Spermatophyta</taxon>
        <taxon>Magnoliopsida</taxon>
        <taxon>eudicotyledons</taxon>
        <taxon>Gunneridae</taxon>
        <taxon>Pentapetalae</taxon>
        <taxon>rosids</taxon>
        <taxon>malvids</taxon>
        <taxon>Brassicales</taxon>
        <taxon>Brassicaceae</taxon>
        <taxon>Camelineae</taxon>
        <taxon>Arabidopsis</taxon>
    </lineage>
</organism>
<keyword id="KW-0472">Membrane</keyword>
<keyword id="KW-1185">Reference proteome</keyword>
<keyword id="KW-0812">Transmembrane</keyword>
<keyword id="KW-1133">Transmembrane helix</keyword>
<keyword id="KW-0813">Transport</keyword>
<gene>
    <name evidence="2" type="primary">DTX20</name>
    <name evidence="4" type="ordered locus">At1g33100</name>
    <name evidence="5" type="ORF">F9L11.27</name>
    <name evidence="6" type="ORF">T9L6.18</name>
</gene>